<feature type="chain" id="PRO_0000389899" description="Acetyl-coenzyme A carboxylase carboxyl transferase subunit beta">
    <location>
        <begin position="1"/>
        <end position="297"/>
    </location>
</feature>
<feature type="domain" description="CoA carboxyltransferase N-terminal" evidence="2">
    <location>
        <begin position="25"/>
        <end position="294"/>
    </location>
</feature>
<proteinExistence type="inferred from homology"/>
<sequence>MNWISNVVRPKIRDFLARREVPENLWVKCPETGQMVFHKDLEANLYVIPASGYHMRMDAVKRLKATFDDGAYEEVALPEVATDPLKFRDERRYIDRLKDARTKTGYQDAVKVATGMLTELPVTIAVQDFGFMGGSLGMAAGEAVVKGLQTAAEKGTPFIMFAASGGARMQEGILSLMQMPRTTAAIQELRETRKPYIVVLTNPTTGGVTASYAMLGDIQIAEPGALIGFAGPRVIEQTIREKLPDGFQRAEYLHEHGMLDMVVHRHQMRDTLGRLCRMLMKAPALPPKGRLPRPEAA</sequence>
<organism>
    <name type="scientific">Xanthobacter autotrophicus (strain ATCC BAA-1158 / Py2)</name>
    <dbReference type="NCBI Taxonomy" id="78245"/>
    <lineage>
        <taxon>Bacteria</taxon>
        <taxon>Pseudomonadati</taxon>
        <taxon>Pseudomonadota</taxon>
        <taxon>Alphaproteobacteria</taxon>
        <taxon>Hyphomicrobiales</taxon>
        <taxon>Xanthobacteraceae</taxon>
        <taxon>Xanthobacter</taxon>
    </lineage>
</organism>
<dbReference type="EC" id="2.1.3.15" evidence="1"/>
<dbReference type="EMBL" id="CP000781">
    <property type="protein sequence ID" value="ABS66941.1"/>
    <property type="molecule type" value="Genomic_DNA"/>
</dbReference>
<dbReference type="SMR" id="A7IFZ8"/>
<dbReference type="STRING" id="78245.Xaut_1696"/>
<dbReference type="KEGG" id="xau:Xaut_1696"/>
<dbReference type="eggNOG" id="COG0777">
    <property type="taxonomic scope" value="Bacteria"/>
</dbReference>
<dbReference type="HOGENOM" id="CLU_015486_1_0_5"/>
<dbReference type="OrthoDB" id="9772975at2"/>
<dbReference type="PhylomeDB" id="A7IFZ8"/>
<dbReference type="UniPathway" id="UPA00655">
    <property type="reaction ID" value="UER00711"/>
</dbReference>
<dbReference type="Proteomes" id="UP000002417">
    <property type="component" value="Chromosome"/>
</dbReference>
<dbReference type="GO" id="GO:0009329">
    <property type="term" value="C:acetate CoA-transferase complex"/>
    <property type="evidence" value="ECO:0007669"/>
    <property type="project" value="TreeGrafter"/>
</dbReference>
<dbReference type="GO" id="GO:0003989">
    <property type="term" value="F:acetyl-CoA carboxylase activity"/>
    <property type="evidence" value="ECO:0007669"/>
    <property type="project" value="InterPro"/>
</dbReference>
<dbReference type="GO" id="GO:0005524">
    <property type="term" value="F:ATP binding"/>
    <property type="evidence" value="ECO:0007669"/>
    <property type="project" value="UniProtKB-KW"/>
</dbReference>
<dbReference type="GO" id="GO:0016743">
    <property type="term" value="F:carboxyl- or carbamoyltransferase activity"/>
    <property type="evidence" value="ECO:0007669"/>
    <property type="project" value="UniProtKB-UniRule"/>
</dbReference>
<dbReference type="GO" id="GO:0006633">
    <property type="term" value="P:fatty acid biosynthetic process"/>
    <property type="evidence" value="ECO:0007669"/>
    <property type="project" value="UniProtKB-KW"/>
</dbReference>
<dbReference type="GO" id="GO:2001295">
    <property type="term" value="P:malonyl-CoA biosynthetic process"/>
    <property type="evidence" value="ECO:0007669"/>
    <property type="project" value="UniProtKB-UniRule"/>
</dbReference>
<dbReference type="Gene3D" id="3.90.226.10">
    <property type="entry name" value="2-enoyl-CoA Hydratase, Chain A, domain 1"/>
    <property type="match status" value="1"/>
</dbReference>
<dbReference type="HAMAP" id="MF_01395">
    <property type="entry name" value="AcetylCoA_CT_beta"/>
    <property type="match status" value="1"/>
</dbReference>
<dbReference type="InterPro" id="IPR034733">
    <property type="entry name" value="AcCoA_carboxyl_beta"/>
</dbReference>
<dbReference type="InterPro" id="IPR000438">
    <property type="entry name" value="Acetyl_CoA_COase_Trfase_b_su"/>
</dbReference>
<dbReference type="InterPro" id="IPR029045">
    <property type="entry name" value="ClpP/crotonase-like_dom_sf"/>
</dbReference>
<dbReference type="InterPro" id="IPR011762">
    <property type="entry name" value="COA_CT_N"/>
</dbReference>
<dbReference type="NCBIfam" id="TIGR00515">
    <property type="entry name" value="accD"/>
    <property type="match status" value="1"/>
</dbReference>
<dbReference type="PANTHER" id="PTHR42995">
    <property type="entry name" value="ACETYL-COENZYME A CARBOXYLASE CARBOXYL TRANSFERASE SUBUNIT BETA, CHLOROPLASTIC"/>
    <property type="match status" value="1"/>
</dbReference>
<dbReference type="PANTHER" id="PTHR42995:SF5">
    <property type="entry name" value="ACETYL-COENZYME A CARBOXYLASE CARBOXYL TRANSFERASE SUBUNIT BETA, CHLOROPLASTIC"/>
    <property type="match status" value="1"/>
</dbReference>
<dbReference type="Pfam" id="PF01039">
    <property type="entry name" value="Carboxyl_trans"/>
    <property type="match status" value="1"/>
</dbReference>
<dbReference type="PRINTS" id="PR01070">
    <property type="entry name" value="ACCCTRFRASEB"/>
</dbReference>
<dbReference type="SUPFAM" id="SSF52096">
    <property type="entry name" value="ClpP/crotonase"/>
    <property type="match status" value="1"/>
</dbReference>
<dbReference type="PROSITE" id="PS50980">
    <property type="entry name" value="COA_CT_NTER"/>
    <property type="match status" value="1"/>
</dbReference>
<evidence type="ECO:0000255" key="1">
    <source>
        <dbReference type="HAMAP-Rule" id="MF_01395"/>
    </source>
</evidence>
<evidence type="ECO:0000255" key="2">
    <source>
        <dbReference type="PROSITE-ProRule" id="PRU01136"/>
    </source>
</evidence>
<reference key="1">
    <citation type="submission" date="2007-07" db="EMBL/GenBank/DDBJ databases">
        <title>Complete sequence of chromosome of Xanthobacter autotrophicus Py2.</title>
        <authorList>
            <consortium name="US DOE Joint Genome Institute"/>
            <person name="Copeland A."/>
            <person name="Lucas S."/>
            <person name="Lapidus A."/>
            <person name="Barry K."/>
            <person name="Glavina del Rio T."/>
            <person name="Hammon N."/>
            <person name="Israni S."/>
            <person name="Dalin E."/>
            <person name="Tice H."/>
            <person name="Pitluck S."/>
            <person name="Sims D."/>
            <person name="Brettin T."/>
            <person name="Bruce D."/>
            <person name="Detter J.C."/>
            <person name="Han C."/>
            <person name="Tapia R."/>
            <person name="Brainard J."/>
            <person name="Schmutz J."/>
            <person name="Larimer F."/>
            <person name="Land M."/>
            <person name="Hauser L."/>
            <person name="Kyrpides N."/>
            <person name="Kim E."/>
            <person name="Ensigns S.A."/>
            <person name="Richardson P."/>
        </authorList>
    </citation>
    <scope>NUCLEOTIDE SEQUENCE [LARGE SCALE GENOMIC DNA]</scope>
    <source>
        <strain>ATCC BAA-1158 / Py2</strain>
    </source>
</reference>
<keyword id="KW-0067">ATP-binding</keyword>
<keyword id="KW-0963">Cytoplasm</keyword>
<keyword id="KW-0275">Fatty acid biosynthesis</keyword>
<keyword id="KW-0276">Fatty acid metabolism</keyword>
<keyword id="KW-0444">Lipid biosynthesis</keyword>
<keyword id="KW-0443">Lipid metabolism</keyword>
<keyword id="KW-0547">Nucleotide-binding</keyword>
<keyword id="KW-1185">Reference proteome</keyword>
<keyword id="KW-0808">Transferase</keyword>
<name>ACCD_XANP2</name>
<protein>
    <recommendedName>
        <fullName evidence="1">Acetyl-coenzyme A carboxylase carboxyl transferase subunit beta</fullName>
        <shortName evidence="1">ACCase subunit beta</shortName>
        <shortName evidence="1">Acetyl-CoA carboxylase carboxyltransferase subunit beta</shortName>
        <ecNumber evidence="1">2.1.3.15</ecNumber>
    </recommendedName>
</protein>
<comment type="function">
    <text evidence="1">Component of the acetyl coenzyme A carboxylase (ACC) complex. Biotin carboxylase (BC) catalyzes the carboxylation of biotin on its carrier protein (BCCP) and then the CO(2) group is transferred by the transcarboxylase to acetyl-CoA to form malonyl-CoA.</text>
</comment>
<comment type="catalytic activity">
    <reaction evidence="1">
        <text>N(6)-carboxybiotinyl-L-lysyl-[protein] + acetyl-CoA = N(6)-biotinyl-L-lysyl-[protein] + malonyl-CoA</text>
        <dbReference type="Rhea" id="RHEA:54728"/>
        <dbReference type="Rhea" id="RHEA-COMP:10505"/>
        <dbReference type="Rhea" id="RHEA-COMP:10506"/>
        <dbReference type="ChEBI" id="CHEBI:57288"/>
        <dbReference type="ChEBI" id="CHEBI:57384"/>
        <dbReference type="ChEBI" id="CHEBI:83144"/>
        <dbReference type="ChEBI" id="CHEBI:83145"/>
        <dbReference type="EC" id="2.1.3.15"/>
    </reaction>
</comment>
<comment type="pathway">
    <text evidence="1">Lipid metabolism; malonyl-CoA biosynthesis; malonyl-CoA from acetyl-CoA: step 1/1.</text>
</comment>
<comment type="subunit">
    <text evidence="1">Acetyl-CoA carboxylase is a heterohexamer composed of biotin carboxyl carrier protein (AccB), biotin carboxylase (AccC) and two subunits each of ACCase subunit alpha (AccA) and ACCase subunit beta (AccD).</text>
</comment>
<comment type="subcellular location">
    <subcellularLocation>
        <location evidence="1">Cytoplasm</location>
    </subcellularLocation>
</comment>
<comment type="similarity">
    <text evidence="1">Belongs to the AccD/PCCB family.</text>
</comment>
<accession>A7IFZ8</accession>
<gene>
    <name evidence="1" type="primary">accD</name>
    <name type="ordered locus">Xaut_1696</name>
</gene>